<comment type="similarity">
    <text evidence="1">Belongs to the nanovirus U1 protein family.</text>
</comment>
<organismHost>
    <name type="scientific">Cicer arietinum</name>
    <name type="common">Chickpea</name>
    <name type="synonym">Garbanzo</name>
    <dbReference type="NCBI Taxonomy" id="3827"/>
</organismHost>
<organismHost>
    <name type="scientific">Lens culinaris</name>
    <name type="common">Lentil</name>
    <name type="synonym">Cicer lens</name>
    <dbReference type="NCBI Taxonomy" id="3864"/>
</organismHost>
<organismHost>
    <name type="scientific">Phaseolus vulgaris</name>
    <name type="common">Kidney bean</name>
    <name type="synonym">French bean</name>
    <dbReference type="NCBI Taxonomy" id="3885"/>
</organismHost>
<organismHost>
    <name type="scientific">Vicia faba</name>
    <name type="common">Broad bean</name>
    <name type="synonym">Faba vulgaris</name>
    <dbReference type="NCBI Taxonomy" id="3906"/>
</organismHost>
<accession>Q9WIJ6</accession>
<protein>
    <recommendedName>
        <fullName>Protein U1</fullName>
    </recommendedName>
</protein>
<proteinExistence type="inferred from homology"/>
<evidence type="ECO:0000305" key="1"/>
<keyword id="KW-1185">Reference proteome</keyword>
<sequence length="155" mass="17980">MGVSPVRDSWLVDEASDELISSERKLIAVECHDDDSQVINVKVEDICKDMSDKVVLKLQFRLCHKYRKLLDITLLGCRMKVYTQLKNTSLNSLKSLLQKRMINICIGNYAIGIRMFFVNINQFIKSCKWIVNTEDVYTICTLYHTRDTDVLNVIK</sequence>
<name>U1_FBNY1</name>
<organism>
    <name type="scientific">Faba bean necrotic yellows virus (isolate Egyptian EV1-93)</name>
    <name type="common">FBNYV</name>
    <dbReference type="NCBI Taxonomy" id="291603"/>
    <lineage>
        <taxon>Viruses</taxon>
        <taxon>Monodnaviria</taxon>
        <taxon>Shotokuvirae</taxon>
        <taxon>Cressdnaviricota</taxon>
        <taxon>Arfiviricetes</taxon>
        <taxon>Mulpavirales</taxon>
        <taxon>Nanoviridae</taxon>
        <taxon>Nanovirus</taxon>
        <taxon>Faba bean necrotic yellows virus</taxon>
    </lineage>
</organism>
<gene>
    <name type="primary">DNA-U1</name>
    <name type="synonym">C3</name>
</gene>
<feature type="chain" id="PRO_0000378533" description="Protein U1">
    <location>
        <begin position="1"/>
        <end position="155"/>
    </location>
</feature>
<reference key="1">
    <citation type="journal article" date="1998" name="J. Gen. Virol.">
        <title>Ten distinct circular ssDNA components, four of which encode putative replication-associated proteins, are associated with the faba bean necrotic yellows virus genome.</title>
        <authorList>
            <person name="Katul L."/>
            <person name="Timchenko T."/>
            <person name="Gronenborn B."/>
            <person name="Vetten H.J."/>
        </authorList>
    </citation>
    <scope>NUCLEOTIDE SEQUENCE [GENOMIC DNA]</scope>
</reference>
<dbReference type="EMBL" id="AJ132181">
    <property type="protein sequence ID" value="CAB44021.1"/>
    <property type="molecule type" value="Genomic_DNA"/>
</dbReference>
<dbReference type="KEGG" id="vg:993374"/>
<dbReference type="Proteomes" id="UP001508024">
    <property type="component" value="Genome"/>
</dbReference>